<name>BRWD3_MOUSE</name>
<sequence length="1799" mass="202942">MAAAPTQIEAELYYLIARFLQSGPCNKSAQVLVQELEEHQLIPRRLDWEGKEHRRSFEDLVAANAHIPPDYLLKICERIGPLLDKEIPQSVPGVQTLLGVGRQSLLRDAKDCKSTLWNGSAFAALHRGRPPELPVNYVKPPNVVNITSARQLTGCSRFSHVFPSSAYQHIKMHKRILGHLSSVYCVAFDRSGRRIFTGSDDCLVKIWATDDGRLLATLRGHSAEISDMAVNYENTLIAAGSCDKVVRVWCLRTCAPVAVLQGHSASITSIQFCPSTKGTTRYLTSTGADGTICFWQWHVKTMKFRDRPVKFTERSRPGVQISCSSFSSGGMFITTGSTDHVIRIYYLGSEIPEKIAELESHTDKVVAVQFCNNGDSLRFVSGSRDGTARIWQYQQQEWKSIVLDMATKMSGNNLTSAEDKVTKLKVTMVAWDRYDTTVITAVNNFLLKVWNSVTGQLLHTLSGHDDEVFVLEAHPFDQRIILSAGHDGNIFIWDLDRGTKIRNYFNMIEGQGHGAVFDCKFSPDGNHFACTDSHGHLLLFGFGCSKYYEKIPDQMFFHTDYRPLIRDANNYVLDEQTQQAPHLMPPPFLVDVDGNPHPTKFQRLVPGRENCKDEQLIPQLGYVANGDGEVVEQVIGQQTNDQEESILDGIIRELQREQDLRLINEGDVPHFPINRSYSVNGALSSPNMDIPSSPNIGLRRSGQIEGVRQMHNNAPRSQMATERDLMAWSRRVVVNELNSGVSRVQEECRNAKGDLEVSLYTVEKKKKPSYPIQRNDYQPSCGRSLRRTQRKRQHTYLTRSNIEHNSQASSQTSGVQEDSDSSSEEDETVGTSDASVEDPVVEWQSESSSSDSSSEYSDWIADAGINLQPPKRQTRQATQKIYSSSEDENLKLEDRQKKPKQTKKKKGGLVSMAGEPNEEWLAPQWILDTIPRRSPFVPQMGDELIYFRQGHEAYVRAVRKSKIYSVNLQKQPWNKMDLREQEFVKIVGIKYEIGPPTLCCLKLAFLDPISGKMTGESFSIKYHDMPDVIDFLVLHQFYNEAKERNWQIGDRFRSIIDDAWWFGTVESQQPFQPEYPDSSFQCYSVHWDNNEREKMSPWDMEPIPDGTAFPDEVGAGIPVSQEELTALLYKPQEGEWGAHSRDEECERVIQGINNLLSLDFASPFAVPVDLSAYPLYCTVVAYPTDLNTIKQRLENRFYRRISALMWEVRYIEHNARTFNEPDSPIVKAAKIVTDVLLRFIGDQSCSDILDTYNKIKAEDPDSSDLEEDSEMVDLDSDGPGTSSGRRAKCRGRRQSLKCNPDAWKKQCEELLSLIYEREDSEPFRQPADPQSYPVQQQQEGESSQSVPPDRQDPSLSEDYQDGIDTPMDFSTVKETLESGNYDSPLEFYKDVRQIFSNSKAYTSNKKSRIYSMTLRLSALFENHIKNIISDYKSAIQSQKRRRPRYRKRLRSSSSSLSSSRAPSPKGKQKQMKLQPKNDQNTSVAYARTSSPFSSPVSDAAEGVSLYLLDDEGDGPFSPSSFSGYSRSGNSHDPGKAKSFRNRVLPAKQDHSLDGPLTNVDGREPRTGAKRKLLSASEEDESMGGEEKEMKETKEQVHLSSSESGELGSSLSSESTSGSDSDSESTSRTDQDYVDGDHDYSKFIQTRPKRKLRKQHTNGKRNWKTRGTGGRGRWGRWGRWSRGGRGRGGRGRGGRGRGGGGGRGRGRGRGGRGASRGSSRAKRARVADDEFDTMFSGRFSRLPRIKTRNQGRRTVLYNDDSDNDNFVSTEDPLNLGTSRSGRVRKMTEKARVSHLMGWNY</sequence>
<organism>
    <name type="scientific">Mus musculus</name>
    <name type="common">Mouse</name>
    <dbReference type="NCBI Taxonomy" id="10090"/>
    <lineage>
        <taxon>Eukaryota</taxon>
        <taxon>Metazoa</taxon>
        <taxon>Chordata</taxon>
        <taxon>Craniata</taxon>
        <taxon>Vertebrata</taxon>
        <taxon>Euteleostomi</taxon>
        <taxon>Mammalia</taxon>
        <taxon>Eutheria</taxon>
        <taxon>Euarchontoglires</taxon>
        <taxon>Glires</taxon>
        <taxon>Rodentia</taxon>
        <taxon>Myomorpha</taxon>
        <taxon>Muroidea</taxon>
        <taxon>Muridae</taxon>
        <taxon>Murinae</taxon>
        <taxon>Mus</taxon>
        <taxon>Mus</taxon>
    </lineage>
</organism>
<dbReference type="EMBL" id="AK050539">
    <property type="protein sequence ID" value="BAC34314.1"/>
    <property type="molecule type" value="mRNA"/>
</dbReference>
<dbReference type="EMBL" id="AK139563">
    <property type="protein sequence ID" value="BAE24064.1"/>
    <property type="molecule type" value="mRNA"/>
</dbReference>
<dbReference type="EMBL" id="AK163354">
    <property type="protein sequence ID" value="BAE37315.1"/>
    <property type="molecule type" value="mRNA"/>
</dbReference>
<dbReference type="EMBL" id="AL731764">
    <property type="status" value="NOT_ANNOTATED_CDS"/>
    <property type="molecule type" value="Genomic_DNA"/>
</dbReference>
<dbReference type="EMBL" id="BX000698">
    <property type="status" value="NOT_ANNOTATED_CDS"/>
    <property type="molecule type" value="Genomic_DNA"/>
</dbReference>
<dbReference type="EMBL" id="BC082562">
    <property type="protein sequence ID" value="AAH82562.1"/>
    <property type="molecule type" value="mRNA"/>
</dbReference>
<dbReference type="CCDS" id="CCDS41100.1">
    <molecule id="A2AHJ4-1"/>
</dbReference>
<dbReference type="RefSeq" id="NP_001074946.1">
    <molecule id="A2AHJ4-1"/>
    <property type="nucleotide sequence ID" value="NM_001081477.2"/>
</dbReference>
<dbReference type="SMR" id="A2AHJ4"/>
<dbReference type="BioGRID" id="238286">
    <property type="interactions" value="65"/>
</dbReference>
<dbReference type="FunCoup" id="A2AHJ4">
    <property type="interactions" value="3310"/>
</dbReference>
<dbReference type="IntAct" id="A2AHJ4">
    <property type="interactions" value="54"/>
</dbReference>
<dbReference type="STRING" id="10090.ENSMUSP00000123588"/>
<dbReference type="GlyGen" id="A2AHJ4">
    <property type="glycosylation" value="2 sites, 1 O-linked glycan (2 sites)"/>
</dbReference>
<dbReference type="iPTMnet" id="A2AHJ4"/>
<dbReference type="PhosphoSitePlus" id="A2AHJ4"/>
<dbReference type="PaxDb" id="10090-ENSMUSP00000123588"/>
<dbReference type="PeptideAtlas" id="A2AHJ4"/>
<dbReference type="ProteomicsDB" id="265242">
    <molecule id="A2AHJ4-1"/>
</dbReference>
<dbReference type="ProteomicsDB" id="265243">
    <molecule id="A2AHJ4-2"/>
</dbReference>
<dbReference type="ProteomicsDB" id="265244">
    <molecule id="A2AHJ4-3"/>
</dbReference>
<dbReference type="Antibodypedia" id="537">
    <property type="antibodies" value="51 antibodies from 16 providers"/>
</dbReference>
<dbReference type="Ensembl" id="ENSMUST00000101283.4">
    <molecule id="A2AHJ4-3"/>
    <property type="protein sequence ID" value="ENSMUSP00000098841.4"/>
    <property type="gene ID" value="ENSMUSG00000063663.12"/>
</dbReference>
<dbReference type="Ensembl" id="ENSMUST00000150434.8">
    <molecule id="A2AHJ4-1"/>
    <property type="protein sequence ID" value="ENSMUSP00000123588.2"/>
    <property type="gene ID" value="ENSMUSG00000063663.12"/>
</dbReference>
<dbReference type="GeneID" id="382236"/>
<dbReference type="KEGG" id="mmu:382236"/>
<dbReference type="UCSC" id="uc009ucm.1">
    <molecule id="A2AHJ4-1"/>
    <property type="organism name" value="mouse"/>
</dbReference>
<dbReference type="UCSC" id="uc009ucn.1">
    <molecule id="A2AHJ4-2"/>
    <property type="organism name" value="mouse"/>
</dbReference>
<dbReference type="AGR" id="MGI:3029414"/>
<dbReference type="CTD" id="254065"/>
<dbReference type="MGI" id="MGI:3029414">
    <property type="gene designation" value="Brwd3"/>
</dbReference>
<dbReference type="VEuPathDB" id="HostDB:ENSMUSG00000063663"/>
<dbReference type="eggNOG" id="KOG0644">
    <property type="taxonomic scope" value="Eukaryota"/>
</dbReference>
<dbReference type="GeneTree" id="ENSGT00950000183107"/>
<dbReference type="HOGENOM" id="CLU_001108_0_0_1"/>
<dbReference type="InParanoid" id="A2AHJ4"/>
<dbReference type="OMA" id="TVVTSWK"/>
<dbReference type="OrthoDB" id="538223at2759"/>
<dbReference type="PhylomeDB" id="A2AHJ4"/>
<dbReference type="TreeFam" id="TF324197"/>
<dbReference type="BioGRID-ORCS" id="382236">
    <property type="hits" value="2 hits in 83 CRISPR screens"/>
</dbReference>
<dbReference type="ChiTaRS" id="Brwd3">
    <property type="organism name" value="mouse"/>
</dbReference>
<dbReference type="PRO" id="PR:A2AHJ4"/>
<dbReference type="Proteomes" id="UP000000589">
    <property type="component" value="Chromosome X"/>
</dbReference>
<dbReference type="RNAct" id="A2AHJ4">
    <property type="molecule type" value="protein"/>
</dbReference>
<dbReference type="Bgee" id="ENSMUSG00000063663">
    <property type="expression patterns" value="Expressed in embryonic post-anal tail and 215 other cell types or tissues"/>
</dbReference>
<dbReference type="ExpressionAtlas" id="A2AHJ4">
    <property type="expression patterns" value="baseline and differential"/>
</dbReference>
<dbReference type="GO" id="GO:0007010">
    <property type="term" value="P:cytoskeleton organization"/>
    <property type="evidence" value="ECO:0000250"/>
    <property type="project" value="UniProtKB"/>
</dbReference>
<dbReference type="GO" id="GO:0008360">
    <property type="term" value="P:regulation of cell shape"/>
    <property type="evidence" value="ECO:0000250"/>
    <property type="project" value="UniProtKB"/>
</dbReference>
<dbReference type="CDD" id="cd05529">
    <property type="entry name" value="Bromo_WDR9_I_like"/>
    <property type="match status" value="1"/>
</dbReference>
<dbReference type="CDD" id="cd00200">
    <property type="entry name" value="WD40"/>
    <property type="match status" value="1"/>
</dbReference>
<dbReference type="FunFam" id="2.130.10.10:FF:000071">
    <property type="entry name" value="Bromodomain and WD repeat domain containing 1"/>
    <property type="match status" value="1"/>
</dbReference>
<dbReference type="FunFam" id="1.20.920.10:FF:000008">
    <property type="entry name" value="Bromodomain and WD repeat domain containing 3"/>
    <property type="match status" value="1"/>
</dbReference>
<dbReference type="FunFam" id="1.20.920.10:FF:000034">
    <property type="entry name" value="Bromodomain and WD repeat domain containing 3"/>
    <property type="match status" value="1"/>
</dbReference>
<dbReference type="FunFam" id="2.130.10.10:FF:000222">
    <property type="entry name" value="Bromodomain and WD repeat domain containing 3"/>
    <property type="match status" value="1"/>
</dbReference>
<dbReference type="FunFam" id="2.130.10.10:FF:000328">
    <property type="entry name" value="Bromodomain and WD repeat domain containing 3"/>
    <property type="match status" value="1"/>
</dbReference>
<dbReference type="Gene3D" id="1.20.920.10">
    <property type="entry name" value="Bromodomain-like"/>
    <property type="match status" value="2"/>
</dbReference>
<dbReference type="Gene3D" id="2.130.10.10">
    <property type="entry name" value="YVTN repeat-like/Quinoprotein amine dehydrogenase"/>
    <property type="match status" value="2"/>
</dbReference>
<dbReference type="InterPro" id="IPR052060">
    <property type="entry name" value="Bromo_WD_repeat"/>
</dbReference>
<dbReference type="InterPro" id="IPR001487">
    <property type="entry name" value="Bromodomain"/>
</dbReference>
<dbReference type="InterPro" id="IPR036427">
    <property type="entry name" value="Bromodomain-like_sf"/>
</dbReference>
<dbReference type="InterPro" id="IPR015943">
    <property type="entry name" value="WD40/YVTN_repeat-like_dom_sf"/>
</dbReference>
<dbReference type="InterPro" id="IPR019775">
    <property type="entry name" value="WD40_repeat_CS"/>
</dbReference>
<dbReference type="InterPro" id="IPR036322">
    <property type="entry name" value="WD40_repeat_dom_sf"/>
</dbReference>
<dbReference type="InterPro" id="IPR001680">
    <property type="entry name" value="WD40_rpt"/>
</dbReference>
<dbReference type="PANTHER" id="PTHR16266:SF25">
    <property type="entry name" value="BROMODOMAIN AND WD REPEAT-CONTAINING PROTEIN 3"/>
    <property type="match status" value="1"/>
</dbReference>
<dbReference type="PANTHER" id="PTHR16266">
    <property type="entry name" value="WD REPEAT DOMAIN 9"/>
    <property type="match status" value="1"/>
</dbReference>
<dbReference type="Pfam" id="PF00439">
    <property type="entry name" value="Bromodomain"/>
    <property type="match status" value="2"/>
</dbReference>
<dbReference type="Pfam" id="PF25437">
    <property type="entry name" value="BRWD1_N"/>
    <property type="match status" value="1"/>
</dbReference>
<dbReference type="Pfam" id="PF25313">
    <property type="entry name" value="BRWD_AD"/>
    <property type="match status" value="1"/>
</dbReference>
<dbReference type="Pfam" id="PF00400">
    <property type="entry name" value="WD40"/>
    <property type="match status" value="7"/>
</dbReference>
<dbReference type="PRINTS" id="PR00503">
    <property type="entry name" value="BROMODOMAIN"/>
</dbReference>
<dbReference type="SMART" id="SM00297">
    <property type="entry name" value="BROMO"/>
    <property type="match status" value="2"/>
</dbReference>
<dbReference type="SMART" id="SM00320">
    <property type="entry name" value="WD40"/>
    <property type="match status" value="8"/>
</dbReference>
<dbReference type="SUPFAM" id="SSF47370">
    <property type="entry name" value="Bromodomain"/>
    <property type="match status" value="2"/>
</dbReference>
<dbReference type="SUPFAM" id="SSF50978">
    <property type="entry name" value="WD40 repeat-like"/>
    <property type="match status" value="1"/>
</dbReference>
<dbReference type="PROSITE" id="PS50014">
    <property type="entry name" value="BROMODOMAIN_2"/>
    <property type="match status" value="2"/>
</dbReference>
<dbReference type="PROSITE" id="PS00678">
    <property type="entry name" value="WD_REPEATS_1"/>
    <property type="match status" value="2"/>
</dbReference>
<dbReference type="PROSITE" id="PS50082">
    <property type="entry name" value="WD_REPEATS_2"/>
    <property type="match status" value="5"/>
</dbReference>
<dbReference type="PROSITE" id="PS50294">
    <property type="entry name" value="WD_REPEATS_REGION"/>
    <property type="match status" value="1"/>
</dbReference>
<reference key="1">
    <citation type="journal article" date="2005" name="Science">
        <title>The transcriptional landscape of the mammalian genome.</title>
        <authorList>
            <person name="Carninci P."/>
            <person name="Kasukawa T."/>
            <person name="Katayama S."/>
            <person name="Gough J."/>
            <person name="Frith M.C."/>
            <person name="Maeda N."/>
            <person name="Oyama R."/>
            <person name="Ravasi T."/>
            <person name="Lenhard B."/>
            <person name="Wells C."/>
            <person name="Kodzius R."/>
            <person name="Shimokawa K."/>
            <person name="Bajic V.B."/>
            <person name="Brenner S.E."/>
            <person name="Batalov S."/>
            <person name="Forrest A.R."/>
            <person name="Zavolan M."/>
            <person name="Davis M.J."/>
            <person name="Wilming L.G."/>
            <person name="Aidinis V."/>
            <person name="Allen J.E."/>
            <person name="Ambesi-Impiombato A."/>
            <person name="Apweiler R."/>
            <person name="Aturaliya R.N."/>
            <person name="Bailey T.L."/>
            <person name="Bansal M."/>
            <person name="Baxter L."/>
            <person name="Beisel K.W."/>
            <person name="Bersano T."/>
            <person name="Bono H."/>
            <person name="Chalk A.M."/>
            <person name="Chiu K.P."/>
            <person name="Choudhary V."/>
            <person name="Christoffels A."/>
            <person name="Clutterbuck D.R."/>
            <person name="Crowe M.L."/>
            <person name="Dalla E."/>
            <person name="Dalrymple B.P."/>
            <person name="de Bono B."/>
            <person name="Della Gatta G."/>
            <person name="di Bernardo D."/>
            <person name="Down T."/>
            <person name="Engstrom P."/>
            <person name="Fagiolini M."/>
            <person name="Faulkner G."/>
            <person name="Fletcher C.F."/>
            <person name="Fukushima T."/>
            <person name="Furuno M."/>
            <person name="Futaki S."/>
            <person name="Gariboldi M."/>
            <person name="Georgii-Hemming P."/>
            <person name="Gingeras T.R."/>
            <person name="Gojobori T."/>
            <person name="Green R.E."/>
            <person name="Gustincich S."/>
            <person name="Harbers M."/>
            <person name="Hayashi Y."/>
            <person name="Hensch T.K."/>
            <person name="Hirokawa N."/>
            <person name="Hill D."/>
            <person name="Huminiecki L."/>
            <person name="Iacono M."/>
            <person name="Ikeo K."/>
            <person name="Iwama A."/>
            <person name="Ishikawa T."/>
            <person name="Jakt M."/>
            <person name="Kanapin A."/>
            <person name="Katoh M."/>
            <person name="Kawasawa Y."/>
            <person name="Kelso J."/>
            <person name="Kitamura H."/>
            <person name="Kitano H."/>
            <person name="Kollias G."/>
            <person name="Krishnan S.P."/>
            <person name="Kruger A."/>
            <person name="Kummerfeld S.K."/>
            <person name="Kurochkin I.V."/>
            <person name="Lareau L.F."/>
            <person name="Lazarevic D."/>
            <person name="Lipovich L."/>
            <person name="Liu J."/>
            <person name="Liuni S."/>
            <person name="McWilliam S."/>
            <person name="Madan Babu M."/>
            <person name="Madera M."/>
            <person name="Marchionni L."/>
            <person name="Matsuda H."/>
            <person name="Matsuzawa S."/>
            <person name="Miki H."/>
            <person name="Mignone F."/>
            <person name="Miyake S."/>
            <person name="Morris K."/>
            <person name="Mottagui-Tabar S."/>
            <person name="Mulder N."/>
            <person name="Nakano N."/>
            <person name="Nakauchi H."/>
            <person name="Ng P."/>
            <person name="Nilsson R."/>
            <person name="Nishiguchi S."/>
            <person name="Nishikawa S."/>
            <person name="Nori F."/>
            <person name="Ohara O."/>
            <person name="Okazaki Y."/>
            <person name="Orlando V."/>
            <person name="Pang K.C."/>
            <person name="Pavan W.J."/>
            <person name="Pavesi G."/>
            <person name="Pesole G."/>
            <person name="Petrovsky N."/>
            <person name="Piazza S."/>
            <person name="Reed J."/>
            <person name="Reid J.F."/>
            <person name="Ring B.Z."/>
            <person name="Ringwald M."/>
            <person name="Rost B."/>
            <person name="Ruan Y."/>
            <person name="Salzberg S.L."/>
            <person name="Sandelin A."/>
            <person name="Schneider C."/>
            <person name="Schoenbach C."/>
            <person name="Sekiguchi K."/>
            <person name="Semple C.A."/>
            <person name="Seno S."/>
            <person name="Sessa L."/>
            <person name="Sheng Y."/>
            <person name="Shibata Y."/>
            <person name="Shimada H."/>
            <person name="Shimada K."/>
            <person name="Silva D."/>
            <person name="Sinclair B."/>
            <person name="Sperling S."/>
            <person name="Stupka E."/>
            <person name="Sugiura K."/>
            <person name="Sultana R."/>
            <person name="Takenaka Y."/>
            <person name="Taki K."/>
            <person name="Tammoja K."/>
            <person name="Tan S.L."/>
            <person name="Tang S."/>
            <person name="Taylor M.S."/>
            <person name="Tegner J."/>
            <person name="Teichmann S.A."/>
            <person name="Ueda H.R."/>
            <person name="van Nimwegen E."/>
            <person name="Verardo R."/>
            <person name="Wei C.L."/>
            <person name="Yagi K."/>
            <person name="Yamanishi H."/>
            <person name="Zabarovsky E."/>
            <person name="Zhu S."/>
            <person name="Zimmer A."/>
            <person name="Hide W."/>
            <person name="Bult C."/>
            <person name="Grimmond S.M."/>
            <person name="Teasdale R.D."/>
            <person name="Liu E.T."/>
            <person name="Brusic V."/>
            <person name="Quackenbush J."/>
            <person name="Wahlestedt C."/>
            <person name="Mattick J.S."/>
            <person name="Hume D.A."/>
            <person name="Kai C."/>
            <person name="Sasaki D."/>
            <person name="Tomaru Y."/>
            <person name="Fukuda S."/>
            <person name="Kanamori-Katayama M."/>
            <person name="Suzuki M."/>
            <person name="Aoki J."/>
            <person name="Arakawa T."/>
            <person name="Iida J."/>
            <person name="Imamura K."/>
            <person name="Itoh M."/>
            <person name="Kato T."/>
            <person name="Kawaji H."/>
            <person name="Kawagashira N."/>
            <person name="Kawashima T."/>
            <person name="Kojima M."/>
            <person name="Kondo S."/>
            <person name="Konno H."/>
            <person name="Nakano K."/>
            <person name="Ninomiya N."/>
            <person name="Nishio T."/>
            <person name="Okada M."/>
            <person name="Plessy C."/>
            <person name="Shibata K."/>
            <person name="Shiraki T."/>
            <person name="Suzuki S."/>
            <person name="Tagami M."/>
            <person name="Waki K."/>
            <person name="Watahiki A."/>
            <person name="Okamura-Oho Y."/>
            <person name="Suzuki H."/>
            <person name="Kawai J."/>
            <person name="Hayashizaki Y."/>
        </authorList>
    </citation>
    <scope>NUCLEOTIDE SEQUENCE [LARGE SCALE MRNA] (ISOFORMS 2 AND 3)</scope>
    <scope>NUCLEOTIDE SEQUENCE [LARGE SCALE MRNA] OF 1595-1799 (ISOFORM 1)</scope>
    <source>
        <strain>C57BL/6J</strain>
        <tissue>Egg</tissue>
        <tissue>Pancreas</tissue>
    </source>
</reference>
<reference key="2">
    <citation type="journal article" date="2009" name="PLoS Biol.">
        <title>Lineage-specific biology revealed by a finished genome assembly of the mouse.</title>
        <authorList>
            <person name="Church D.M."/>
            <person name="Goodstadt L."/>
            <person name="Hillier L.W."/>
            <person name="Zody M.C."/>
            <person name="Goldstein S."/>
            <person name="She X."/>
            <person name="Bult C.J."/>
            <person name="Agarwala R."/>
            <person name="Cherry J.L."/>
            <person name="DiCuccio M."/>
            <person name="Hlavina W."/>
            <person name="Kapustin Y."/>
            <person name="Meric P."/>
            <person name="Maglott D."/>
            <person name="Birtle Z."/>
            <person name="Marques A.C."/>
            <person name="Graves T."/>
            <person name="Zhou S."/>
            <person name="Teague B."/>
            <person name="Potamousis K."/>
            <person name="Churas C."/>
            <person name="Place M."/>
            <person name="Herschleb J."/>
            <person name="Runnheim R."/>
            <person name="Forrest D."/>
            <person name="Amos-Landgraf J."/>
            <person name="Schwartz D.C."/>
            <person name="Cheng Z."/>
            <person name="Lindblad-Toh K."/>
            <person name="Eichler E.E."/>
            <person name="Ponting C.P."/>
        </authorList>
    </citation>
    <scope>NUCLEOTIDE SEQUENCE [LARGE SCALE GENOMIC DNA]</scope>
    <source>
        <strain>C57BL/6J</strain>
    </source>
</reference>
<reference key="3">
    <citation type="journal article" date="2004" name="Genome Res.">
        <title>The status, quality, and expansion of the NIH full-length cDNA project: the Mammalian Gene Collection (MGC).</title>
        <authorList>
            <consortium name="The MGC Project Team"/>
        </authorList>
    </citation>
    <scope>NUCLEOTIDE SEQUENCE [LARGE SCALE MRNA] OF 1390-1799 (ISOFORM 1)</scope>
    <source>
        <strain>C57BL/6J</strain>
        <tissue>Eye</tissue>
    </source>
</reference>
<reference key="4">
    <citation type="journal article" date="2010" name="Cell">
        <title>A tissue-specific atlas of mouse protein phosphorylation and expression.</title>
        <authorList>
            <person name="Huttlin E.L."/>
            <person name="Jedrychowski M.P."/>
            <person name="Elias J.E."/>
            <person name="Goswami T."/>
            <person name="Rad R."/>
            <person name="Beausoleil S.A."/>
            <person name="Villen J."/>
            <person name="Haas W."/>
            <person name="Sowa M.E."/>
            <person name="Gygi S.P."/>
        </authorList>
    </citation>
    <scope>PHOSPHORYLATION [LARGE SCALE ANALYSIS] AT SER-884; SER-885; SER-1576 AND SER-1760</scope>
    <scope>IDENTIFICATION BY MASS SPECTROMETRY [LARGE SCALE ANALYSIS]</scope>
    <source>
        <tissue>Kidney</tissue>
        <tissue>Lung</tissue>
        <tissue>Pancreas</tissue>
        <tissue>Spleen</tissue>
        <tissue>Testis</tissue>
    </source>
</reference>
<keyword id="KW-0025">Alternative splicing</keyword>
<keyword id="KW-0103">Bromodomain</keyword>
<keyword id="KW-0597">Phosphoprotein</keyword>
<keyword id="KW-1185">Reference proteome</keyword>
<keyword id="KW-0677">Repeat</keyword>
<keyword id="KW-0853">WD repeat</keyword>
<evidence type="ECO:0000250" key="1"/>
<evidence type="ECO:0000250" key="2">
    <source>
        <dbReference type="UniProtKB" id="Q6RI45"/>
    </source>
</evidence>
<evidence type="ECO:0000255" key="3">
    <source>
        <dbReference type="PROSITE-ProRule" id="PRU00035"/>
    </source>
</evidence>
<evidence type="ECO:0000256" key="4">
    <source>
        <dbReference type="SAM" id="MobiDB-lite"/>
    </source>
</evidence>
<evidence type="ECO:0000303" key="5">
    <source>
    </source>
</evidence>
<evidence type="ECO:0007744" key="6">
    <source>
    </source>
</evidence>
<accession>A2AHJ4</accession>
<accession>Q3TQR7</accession>
<accession>Q3UTB6</accession>
<accession>Q640P3</accession>
<accession>Q8C7D5</accession>
<comment type="function">
    <text evidence="1">Plays a role in the regulation of cell morphology and cytoskeletal organization. Required in the control of cell shape (By similarity).</text>
</comment>
<comment type="alternative products">
    <event type="alternative splicing"/>
    <isoform>
        <id>A2AHJ4-1</id>
        <name>1</name>
        <sequence type="displayed"/>
    </isoform>
    <isoform>
        <id>A2AHJ4-2</id>
        <name>2</name>
        <sequence type="described" ref="VSP_024310 VSP_024311"/>
    </isoform>
    <isoform>
        <id>A2AHJ4-3</id>
        <name>3</name>
        <sequence type="described" ref="VSP_024308 VSP_024309"/>
    </isoform>
</comment>
<proteinExistence type="evidence at protein level"/>
<gene>
    <name type="primary">Brwd3</name>
    <name type="synonym">Gm596</name>
</gene>
<feature type="chain" id="PRO_0000283090" description="Bromodomain and WD repeat-containing protein 3">
    <location>
        <begin position="1"/>
        <end position="1799"/>
    </location>
</feature>
<feature type="repeat" description="WD 1">
    <location>
        <begin position="170"/>
        <end position="209"/>
    </location>
</feature>
<feature type="repeat" description="WD 2">
    <location>
        <begin position="213"/>
        <end position="251"/>
    </location>
</feature>
<feature type="repeat" description="WD 3">
    <location>
        <begin position="255"/>
        <end position="297"/>
    </location>
</feature>
<feature type="repeat" description="WD 4">
    <location>
        <begin position="307"/>
        <end position="347"/>
    </location>
</feature>
<feature type="repeat" description="WD 5">
    <location>
        <begin position="353"/>
        <end position="393"/>
    </location>
</feature>
<feature type="repeat" description="WD 6">
    <location>
        <begin position="400"/>
        <end position="452"/>
    </location>
</feature>
<feature type="repeat" description="WD 7">
    <location>
        <begin position="456"/>
        <end position="495"/>
    </location>
</feature>
<feature type="repeat" description="WD 8">
    <location>
        <begin position="502"/>
        <end position="542"/>
    </location>
</feature>
<feature type="domain" description="Bromo 1" evidence="3">
    <location>
        <begin position="1136"/>
        <end position="1243"/>
    </location>
</feature>
<feature type="domain" description="Bromo 2" evidence="3">
    <location>
        <begin position="1298"/>
        <end position="1427"/>
    </location>
</feature>
<feature type="region of interest" description="Disordered" evidence="4">
    <location>
        <begin position="766"/>
        <end position="912"/>
    </location>
</feature>
<feature type="region of interest" description="Disordered" evidence="4">
    <location>
        <begin position="1258"/>
        <end position="1291"/>
    </location>
</feature>
<feature type="region of interest" description="Disordered" evidence="4">
    <location>
        <begin position="1321"/>
        <end position="1366"/>
    </location>
</feature>
<feature type="region of interest" description="Disordered" evidence="4">
    <location>
        <begin position="1435"/>
        <end position="1482"/>
    </location>
</feature>
<feature type="region of interest" description="Disordered" evidence="4">
    <location>
        <begin position="1517"/>
        <end position="1723"/>
    </location>
</feature>
<feature type="compositionally biased region" description="Basic residues" evidence="4">
    <location>
        <begin position="784"/>
        <end position="794"/>
    </location>
</feature>
<feature type="compositionally biased region" description="Polar residues" evidence="4">
    <location>
        <begin position="795"/>
        <end position="816"/>
    </location>
</feature>
<feature type="compositionally biased region" description="Acidic residues" evidence="4">
    <location>
        <begin position="817"/>
        <end position="828"/>
    </location>
</feature>
<feature type="compositionally biased region" description="Low complexity" evidence="4">
    <location>
        <begin position="845"/>
        <end position="858"/>
    </location>
</feature>
<feature type="compositionally biased region" description="Polar residues" evidence="4">
    <location>
        <begin position="875"/>
        <end position="884"/>
    </location>
</feature>
<feature type="compositionally biased region" description="Basic residues" evidence="4">
    <location>
        <begin position="897"/>
        <end position="907"/>
    </location>
</feature>
<feature type="compositionally biased region" description="Acidic residues" evidence="4">
    <location>
        <begin position="1260"/>
        <end position="1276"/>
    </location>
</feature>
<feature type="compositionally biased region" description="Low complexity" evidence="4">
    <location>
        <begin position="1333"/>
        <end position="1348"/>
    </location>
</feature>
<feature type="compositionally biased region" description="Basic residues" evidence="4">
    <location>
        <begin position="1438"/>
        <end position="1450"/>
    </location>
</feature>
<feature type="compositionally biased region" description="Low complexity" evidence="4">
    <location>
        <begin position="1451"/>
        <end position="1463"/>
    </location>
</feature>
<feature type="compositionally biased region" description="Low complexity" evidence="4">
    <location>
        <begin position="1517"/>
        <end position="1530"/>
    </location>
</feature>
<feature type="compositionally biased region" description="Basic and acidic residues" evidence="4">
    <location>
        <begin position="1584"/>
        <end position="1596"/>
    </location>
</feature>
<feature type="compositionally biased region" description="Low complexity" evidence="4">
    <location>
        <begin position="1598"/>
        <end position="1623"/>
    </location>
</feature>
<feature type="compositionally biased region" description="Basic and acidic residues" evidence="4">
    <location>
        <begin position="1624"/>
        <end position="1640"/>
    </location>
</feature>
<feature type="compositionally biased region" description="Basic residues" evidence="4">
    <location>
        <begin position="1646"/>
        <end position="1663"/>
    </location>
</feature>
<feature type="compositionally biased region" description="Basic residues" evidence="4">
    <location>
        <begin position="1681"/>
        <end position="1694"/>
    </location>
</feature>
<feature type="modified residue" description="Phosphoserine" evidence="2">
    <location>
        <position position="693"/>
    </location>
</feature>
<feature type="modified residue" description="Phosphoserine" evidence="6">
    <location>
        <position position="884"/>
    </location>
</feature>
<feature type="modified residue" description="Phosphoserine" evidence="6">
    <location>
        <position position="885"/>
    </location>
</feature>
<feature type="modified residue" description="Phosphoserine" evidence="2">
    <location>
        <position position="1574"/>
    </location>
</feature>
<feature type="modified residue" description="Phosphoserine" evidence="6">
    <location>
        <position position="1576"/>
    </location>
</feature>
<feature type="modified residue" description="Phosphoserine" evidence="6">
    <location>
        <position position="1760"/>
    </location>
</feature>
<feature type="splice variant" id="VSP_024308" description="In isoform 3." evidence="5">
    <original>VNITSARQLTGCSRFSHVFPSSAYQHIKMHKRILGHLS</original>
    <variation>GFFFVALTVLELYVDQAGLCLSSAGIKVVCHMTSYITF</variation>
    <location>
        <begin position="144"/>
        <end position="181"/>
    </location>
</feature>
<feature type="splice variant" id="VSP_024309" description="In isoform 3." evidence="5">
    <location>
        <begin position="182"/>
        <end position="1799"/>
    </location>
</feature>
<feature type="splice variant" id="VSP_024310" description="In isoform 2." evidence="5">
    <original>FCPSTKGTTRYL</original>
    <variation>VRIMISSLPG</variation>
    <location>
        <begin position="272"/>
        <end position="283"/>
    </location>
</feature>
<feature type="splice variant" id="VSP_024311" description="In isoform 2." evidence="5">
    <location>
        <begin position="284"/>
        <end position="1799"/>
    </location>
</feature>
<protein>
    <recommendedName>
        <fullName>Bromodomain and WD repeat-containing protein 3</fullName>
    </recommendedName>
</protein>